<comment type="subcellular location">
    <subcellularLocation>
        <location evidence="1">Membrane</location>
        <topology evidence="1">Multi-pass membrane protein</topology>
    </subcellularLocation>
</comment>
<comment type="miscellaneous">
    <text evidence="2">Partially overlaps IMA3.</text>
</comment>
<comment type="caution">
    <text evidence="3">Product of a dubious gene prediction unlikely to encode a functional protein. Because of that it is not part of the S.cerevisiae S288c complete/reference proteome set.</text>
</comment>
<accession>A0A023PXN9</accession>
<gene>
    <name evidence="4" type="ordered locus">YIL171W-A</name>
</gene>
<proteinExistence type="uncertain"/>
<sequence length="150" mass="16970">MCLFDQGKAVLVRTVGWPDLFVVGNIVTHIILWRVVKWRDPNGIGTKLFDVLQLGGNTLHITPTIVVGVFETCGINLINCGLFPPLGFCFWMCRRNSHCTLLSYLYEKTFTFVCVFGLVNGTYILVQLIPRVKKSSLLIYVCGRLTNDRK</sequence>
<organism>
    <name type="scientific">Saccharomyces cerevisiae (strain ATCC 204508 / S288c)</name>
    <name type="common">Baker's yeast</name>
    <dbReference type="NCBI Taxonomy" id="559292"/>
    <lineage>
        <taxon>Eukaryota</taxon>
        <taxon>Fungi</taxon>
        <taxon>Dikarya</taxon>
        <taxon>Ascomycota</taxon>
        <taxon>Saccharomycotina</taxon>
        <taxon>Saccharomycetes</taxon>
        <taxon>Saccharomycetales</taxon>
        <taxon>Saccharomycetaceae</taxon>
        <taxon>Saccharomyces</taxon>
    </lineage>
</organism>
<reference key="1">
    <citation type="journal article" date="1997" name="Nature">
        <title>The nucleotide sequence of Saccharomyces cerevisiae chromosome IX.</title>
        <authorList>
            <person name="Churcher C.M."/>
            <person name="Bowman S."/>
            <person name="Badcock K."/>
            <person name="Bankier A.T."/>
            <person name="Brown D."/>
            <person name="Chillingworth T."/>
            <person name="Connor R."/>
            <person name="Devlin K."/>
            <person name="Gentles S."/>
            <person name="Hamlin N."/>
            <person name="Harris D.E."/>
            <person name="Horsnell T."/>
            <person name="Hunt S."/>
            <person name="Jagels K."/>
            <person name="Jones M."/>
            <person name="Lye G."/>
            <person name="Moule S."/>
            <person name="Odell C."/>
            <person name="Pearson D."/>
            <person name="Rajandream M.A."/>
            <person name="Rice P."/>
            <person name="Rowley N."/>
            <person name="Skelton J."/>
            <person name="Smith V."/>
            <person name="Walsh S.V."/>
            <person name="Whitehead S."/>
            <person name="Barrell B.G."/>
        </authorList>
    </citation>
    <scope>NUCLEOTIDE SEQUENCE [LARGE SCALE GENOMIC DNA]</scope>
    <source>
        <strain>ATCC 204508 / S288c</strain>
    </source>
</reference>
<reference key="2">
    <citation type="journal article" date="2014" name="G3 (Bethesda)">
        <title>The reference genome sequence of Saccharomyces cerevisiae: Then and now.</title>
        <authorList>
            <person name="Engel S.R."/>
            <person name="Dietrich F.S."/>
            <person name="Fisk D.G."/>
            <person name="Binkley G."/>
            <person name="Balakrishnan R."/>
            <person name="Costanzo M.C."/>
            <person name="Dwight S.S."/>
            <person name="Hitz B.C."/>
            <person name="Karra K."/>
            <person name="Nash R.S."/>
            <person name="Weng S."/>
            <person name="Wong E.D."/>
            <person name="Lloyd P."/>
            <person name="Skrzypek M.S."/>
            <person name="Miyasato S.R."/>
            <person name="Simison M."/>
            <person name="Cherry J.M."/>
        </authorList>
    </citation>
    <scope>GENOME REANNOTATION</scope>
    <source>
        <strain>ATCC 204508 / S288c</strain>
    </source>
</reference>
<feature type="chain" id="PRO_0000431040" description="Putative uncharacterized membrane protein YIL171W-A">
    <location>
        <begin position="1"/>
        <end position="150"/>
    </location>
</feature>
<feature type="transmembrane region" description="Helical; Name=1" evidence="1">
    <location>
        <begin position="15"/>
        <end position="35"/>
    </location>
</feature>
<feature type="transmembrane region" description="Helical; Name=2" evidence="1">
    <location>
        <begin position="51"/>
        <end position="71"/>
    </location>
</feature>
<feature type="transmembrane region" description="Helical; Name=3" evidence="1">
    <location>
        <begin position="73"/>
        <end position="93"/>
    </location>
</feature>
<feature type="transmembrane region" description="Helical; Name=4" evidence="1">
    <location>
        <begin position="110"/>
        <end position="130"/>
    </location>
</feature>
<keyword id="KW-0472">Membrane</keyword>
<keyword id="KW-0812">Transmembrane</keyword>
<keyword id="KW-1133">Transmembrane helix</keyword>
<protein>
    <recommendedName>
        <fullName>Putative uncharacterized membrane protein YIL171W-A</fullName>
    </recommendedName>
</protein>
<dbReference type="EMBL" id="KJ412277">
    <property type="protein sequence ID" value="AHX39320.1"/>
    <property type="molecule type" value="Genomic_DNA"/>
</dbReference>
<dbReference type="PaxDb" id="4932-YIL171W-A"/>
<dbReference type="EnsemblFungi" id="YIL171W-A_mRNA">
    <property type="protein sequence ID" value="YIL171W-A"/>
    <property type="gene ID" value="YIL171W-A"/>
</dbReference>
<dbReference type="EnsemblFungi" id="YJL220W_mRNA">
    <property type="protein sequence ID" value="YJL220W"/>
    <property type="gene ID" value="YJL220W"/>
</dbReference>
<dbReference type="AGR" id="SGD:S000028798"/>
<dbReference type="SGD" id="S000028798">
    <property type="gene designation" value="YIL171W-A"/>
</dbReference>
<dbReference type="HOGENOM" id="CLU_1662181_0_0_1"/>
<dbReference type="OMA" id="HTELMCL"/>
<dbReference type="GO" id="GO:0016020">
    <property type="term" value="C:membrane"/>
    <property type="evidence" value="ECO:0007669"/>
    <property type="project" value="UniProtKB-SubCell"/>
</dbReference>
<evidence type="ECO:0000255" key="1"/>
<evidence type="ECO:0000305" key="2"/>
<evidence type="ECO:0000305" key="3">
    <source>
    </source>
</evidence>
<evidence type="ECO:0000312" key="4">
    <source>
        <dbReference type="SGD" id="S000028798"/>
    </source>
</evidence>
<name>YI171_YEAST</name>